<evidence type="ECO:0000269" key="1">
    <source>
    </source>
</evidence>
<evidence type="ECO:0000303" key="2">
    <source>
    </source>
</evidence>
<evidence type="ECO:0000305" key="3"/>
<feature type="peptide" id="PRO_0000395651" description="Tachykinin-related peptide 2" evidence="1">
    <location>
        <begin position="1"/>
        <end position="10"/>
    </location>
</feature>
<feature type="modified residue" description="Arginine amide" evidence="1">
    <location>
        <position position="10"/>
    </location>
</feature>
<comment type="subcellular location">
    <subcellularLocation>
        <location evidence="1 3">Secreted</location>
    </subcellularLocation>
</comment>
<comment type="tissue specificity">
    <text evidence="1">Expressed in the antennal lobe (at protein level).</text>
</comment>
<proteinExistence type="evidence at protein level"/>
<accession>P86583</accession>
<sequence>APASGFFGMR</sequence>
<organism>
    <name type="scientific">Oncopeltus fasciatus</name>
    <name type="common">Large milkweed bug</name>
    <dbReference type="NCBI Taxonomy" id="7536"/>
    <lineage>
        <taxon>Eukaryota</taxon>
        <taxon>Metazoa</taxon>
        <taxon>Ecdysozoa</taxon>
        <taxon>Arthropoda</taxon>
        <taxon>Hexapoda</taxon>
        <taxon>Insecta</taxon>
        <taxon>Pterygota</taxon>
        <taxon>Neoptera</taxon>
        <taxon>Paraneoptera</taxon>
        <taxon>Hemiptera</taxon>
        <taxon>Heteroptera</taxon>
        <taxon>Panheteroptera</taxon>
        <taxon>Pentatomomorpha</taxon>
        <taxon>Lygaeoidea</taxon>
        <taxon>Lygaeidae</taxon>
        <taxon>Lygaeinae</taxon>
        <taxon>Oncopeltus</taxon>
    </lineage>
</organism>
<name>TRP2_ONCFA</name>
<protein>
    <recommendedName>
        <fullName evidence="2">Tachykinin-related peptide 2</fullName>
        <shortName evidence="2">TKRP-2</shortName>
    </recommendedName>
</protein>
<reference evidence="3" key="1">
    <citation type="journal article" date="2009" name="Peptides">
        <title>Neuropeptides in Heteroptera: identification of allatotropin-related peptide and tachykinin-related peptides using MALDI-TOF mass spectrometry.</title>
        <authorList>
            <person name="Neupert S."/>
            <person name="Russell W.K."/>
            <person name="Russell D.H."/>
            <person name="Lopez J.D. Jr."/>
            <person name="Predel R."/>
            <person name="Nachman R.J."/>
        </authorList>
    </citation>
    <scope>PROTEIN SEQUENCE</scope>
    <scope>SUBCELLULAR LOCATION</scope>
    <scope>TISSUE SPECIFICITY</scope>
    <scope>AMIDATION AT ARG-10</scope>
    <source>
        <tissue evidence="1">Antennal lobe</tissue>
    </source>
</reference>
<dbReference type="GO" id="GO:0005576">
    <property type="term" value="C:extracellular region"/>
    <property type="evidence" value="ECO:0007005"/>
    <property type="project" value="UniProtKB"/>
</dbReference>
<dbReference type="GO" id="GO:0007218">
    <property type="term" value="P:neuropeptide signaling pathway"/>
    <property type="evidence" value="ECO:0007669"/>
    <property type="project" value="UniProtKB-KW"/>
</dbReference>
<keyword id="KW-0027">Amidation</keyword>
<keyword id="KW-0903">Direct protein sequencing</keyword>
<keyword id="KW-0527">Neuropeptide</keyword>
<keyword id="KW-0964">Secreted</keyword>